<accession>Q6LI45</accession>
<evidence type="ECO:0000255" key="1">
    <source>
        <dbReference type="HAMAP-Rule" id="MF_00434"/>
    </source>
</evidence>
<dbReference type="EC" id="4.2.1.96" evidence="1"/>
<dbReference type="EMBL" id="CR378678">
    <property type="protein sequence ID" value="CAG23035.1"/>
    <property type="molecule type" value="Genomic_DNA"/>
</dbReference>
<dbReference type="RefSeq" id="WP_011221224.1">
    <property type="nucleotide sequence ID" value="NC_006371.1"/>
</dbReference>
<dbReference type="SMR" id="Q6LI45"/>
<dbReference type="STRING" id="298386.PBPRB1163"/>
<dbReference type="KEGG" id="ppr:PBPRB1163"/>
<dbReference type="eggNOG" id="COG2154">
    <property type="taxonomic scope" value="Bacteria"/>
</dbReference>
<dbReference type="HOGENOM" id="CLU_081974_2_2_6"/>
<dbReference type="Proteomes" id="UP000000593">
    <property type="component" value="Chromosome 2"/>
</dbReference>
<dbReference type="GO" id="GO:0008124">
    <property type="term" value="F:4-alpha-hydroxytetrahydrobiopterin dehydratase activity"/>
    <property type="evidence" value="ECO:0007669"/>
    <property type="project" value="UniProtKB-UniRule"/>
</dbReference>
<dbReference type="GO" id="GO:0006729">
    <property type="term" value="P:tetrahydrobiopterin biosynthetic process"/>
    <property type="evidence" value="ECO:0007669"/>
    <property type="project" value="InterPro"/>
</dbReference>
<dbReference type="CDD" id="cd00913">
    <property type="entry name" value="PCD_DCoH_subfamily_a"/>
    <property type="match status" value="1"/>
</dbReference>
<dbReference type="Gene3D" id="3.30.1360.20">
    <property type="entry name" value="Transcriptional coactivator/pterin dehydratase"/>
    <property type="match status" value="1"/>
</dbReference>
<dbReference type="HAMAP" id="MF_00434">
    <property type="entry name" value="Pterin_4_alpha"/>
    <property type="match status" value="1"/>
</dbReference>
<dbReference type="InterPro" id="IPR036428">
    <property type="entry name" value="PCD_sf"/>
</dbReference>
<dbReference type="InterPro" id="IPR050376">
    <property type="entry name" value="Pterin-4-alpha-carb_dehyd"/>
</dbReference>
<dbReference type="InterPro" id="IPR001533">
    <property type="entry name" value="Pterin_deHydtase"/>
</dbReference>
<dbReference type="NCBIfam" id="NF002016">
    <property type="entry name" value="PRK00823.1-1"/>
    <property type="match status" value="1"/>
</dbReference>
<dbReference type="PANTHER" id="PTHR42805">
    <property type="entry name" value="PTERIN-4-ALPHA-CARBINOLAMINE DEHYDRATASE-RELATED"/>
    <property type="match status" value="1"/>
</dbReference>
<dbReference type="PANTHER" id="PTHR42805:SF1">
    <property type="entry name" value="PTERIN-4-ALPHA-CARBINOLAMINE DEHYDRATASE-RELATED"/>
    <property type="match status" value="1"/>
</dbReference>
<dbReference type="Pfam" id="PF01329">
    <property type="entry name" value="Pterin_4a"/>
    <property type="match status" value="1"/>
</dbReference>
<dbReference type="SUPFAM" id="SSF55248">
    <property type="entry name" value="PCD-like"/>
    <property type="match status" value="1"/>
</dbReference>
<reference key="1">
    <citation type="journal article" date="2005" name="Science">
        <title>Life at depth: Photobacterium profundum genome sequence and expression analysis.</title>
        <authorList>
            <person name="Vezzi A."/>
            <person name="Campanaro S."/>
            <person name="D'Angelo M."/>
            <person name="Simonato F."/>
            <person name="Vitulo N."/>
            <person name="Lauro F.M."/>
            <person name="Cestaro A."/>
            <person name="Malacrida G."/>
            <person name="Simionati B."/>
            <person name="Cannata N."/>
            <person name="Romualdi C."/>
            <person name="Bartlett D.H."/>
            <person name="Valle G."/>
        </authorList>
    </citation>
    <scope>NUCLEOTIDE SEQUENCE [LARGE SCALE GENOMIC DNA]</scope>
    <source>
        <strain>ATCC BAA-1253 / SS9</strain>
    </source>
</reference>
<sequence length="112" mass="13043">MSNLHELKCEACHIDAPKVTDLELEEMLQGISQWRVIERDGIKQLEREFTFKNFKLAWAFSNKIAELAEAEFHHPTITLEWGKVTVCWWSHSAKGLHKNDFICAAKTDRCLE</sequence>
<feature type="chain" id="PRO_0000231460" description="Putative pterin-4-alpha-carbinolamine dehydratase">
    <location>
        <begin position="1"/>
        <end position="112"/>
    </location>
</feature>
<name>PHS_PHOPR</name>
<organism>
    <name type="scientific">Photobacterium profundum (strain SS9)</name>
    <dbReference type="NCBI Taxonomy" id="298386"/>
    <lineage>
        <taxon>Bacteria</taxon>
        <taxon>Pseudomonadati</taxon>
        <taxon>Pseudomonadota</taxon>
        <taxon>Gammaproteobacteria</taxon>
        <taxon>Vibrionales</taxon>
        <taxon>Vibrionaceae</taxon>
        <taxon>Photobacterium</taxon>
    </lineage>
</organism>
<comment type="catalytic activity">
    <reaction evidence="1">
        <text>(4aS,6R)-4a-hydroxy-L-erythro-5,6,7,8-tetrahydrobiopterin = (6R)-L-erythro-6,7-dihydrobiopterin + H2O</text>
        <dbReference type="Rhea" id="RHEA:11920"/>
        <dbReference type="ChEBI" id="CHEBI:15377"/>
        <dbReference type="ChEBI" id="CHEBI:15642"/>
        <dbReference type="ChEBI" id="CHEBI:43120"/>
        <dbReference type="EC" id="4.2.1.96"/>
    </reaction>
</comment>
<comment type="similarity">
    <text evidence="1">Belongs to the pterin-4-alpha-carbinolamine dehydratase family.</text>
</comment>
<proteinExistence type="inferred from homology"/>
<keyword id="KW-0456">Lyase</keyword>
<keyword id="KW-1185">Reference proteome</keyword>
<protein>
    <recommendedName>
        <fullName evidence="1">Putative pterin-4-alpha-carbinolamine dehydratase</fullName>
        <shortName evidence="1">PHS</shortName>
        <ecNumber evidence="1">4.2.1.96</ecNumber>
    </recommendedName>
    <alternativeName>
        <fullName evidence="1">4-alpha-hydroxy-tetrahydropterin dehydratase</fullName>
    </alternativeName>
    <alternativeName>
        <fullName evidence="1">Pterin carbinolamine dehydratase</fullName>
        <shortName evidence="1">PCD</shortName>
    </alternativeName>
</protein>
<gene>
    <name type="ordered locus">PBPRB1163</name>
</gene>